<sequence length="260" mass="28964">MKVRTLTAIIALIVFLPILLKGGLVLMIFANILALIALKELLNMNMIKFVSVPGLISAVGLIIIMLPQHAGPWVQVIQLKSLIAMSFIVLSYTVLSKNRFSFMDAAFCLMSVAYVGIGFMFFYETRSEGLHYILYAFLIVWLTDTGAYLFGKMMGKHKLWPVISPNKTIEGFIGGLFCSLIVPLAMLYFVDFNMNVWILLGVTLILSLFGQLGDLVESGFKRHFGVKDSGRILPGHGGILDRFDSFMFVLPLLNILLIQS</sequence>
<dbReference type="EC" id="2.7.7.41"/>
<dbReference type="EMBL" id="BA000018">
    <property type="protein sequence ID" value="BAB42356.1"/>
    <property type="molecule type" value="Genomic_DNA"/>
</dbReference>
<dbReference type="PIR" id="H89899">
    <property type="entry name" value="H89899"/>
</dbReference>
<dbReference type="RefSeq" id="WP_000868413.1">
    <property type="nucleotide sequence ID" value="NC_002745.2"/>
</dbReference>
<dbReference type="SMR" id="Q7A5Y4"/>
<dbReference type="EnsemblBacteria" id="BAB42356">
    <property type="protein sequence ID" value="BAB42356"/>
    <property type="gene ID" value="BAB42356"/>
</dbReference>
<dbReference type="KEGG" id="sau:SA1104"/>
<dbReference type="HOGENOM" id="CLU_037294_2_2_9"/>
<dbReference type="UniPathway" id="UPA00557">
    <property type="reaction ID" value="UER00614"/>
</dbReference>
<dbReference type="GO" id="GO:0005886">
    <property type="term" value="C:plasma membrane"/>
    <property type="evidence" value="ECO:0007669"/>
    <property type="project" value="UniProtKB-SubCell"/>
</dbReference>
<dbReference type="GO" id="GO:0004605">
    <property type="term" value="F:phosphatidate cytidylyltransferase activity"/>
    <property type="evidence" value="ECO:0007669"/>
    <property type="project" value="UniProtKB-EC"/>
</dbReference>
<dbReference type="GO" id="GO:0016024">
    <property type="term" value="P:CDP-diacylglycerol biosynthetic process"/>
    <property type="evidence" value="ECO:0007669"/>
    <property type="project" value="UniProtKB-UniPathway"/>
</dbReference>
<dbReference type="InterPro" id="IPR000374">
    <property type="entry name" value="PC_trans"/>
</dbReference>
<dbReference type="PANTHER" id="PTHR46382">
    <property type="entry name" value="PHOSPHATIDATE CYTIDYLYLTRANSFERASE"/>
    <property type="match status" value="1"/>
</dbReference>
<dbReference type="PANTHER" id="PTHR46382:SF1">
    <property type="entry name" value="PHOSPHATIDATE CYTIDYLYLTRANSFERASE"/>
    <property type="match status" value="1"/>
</dbReference>
<dbReference type="Pfam" id="PF01148">
    <property type="entry name" value="CTP_transf_1"/>
    <property type="match status" value="1"/>
</dbReference>
<dbReference type="PROSITE" id="PS01315">
    <property type="entry name" value="CDS"/>
    <property type="match status" value="1"/>
</dbReference>
<comment type="catalytic activity">
    <reaction>
        <text>a 1,2-diacyl-sn-glycero-3-phosphate + CTP + H(+) = a CDP-1,2-diacyl-sn-glycerol + diphosphate</text>
        <dbReference type="Rhea" id="RHEA:16229"/>
        <dbReference type="ChEBI" id="CHEBI:15378"/>
        <dbReference type="ChEBI" id="CHEBI:33019"/>
        <dbReference type="ChEBI" id="CHEBI:37563"/>
        <dbReference type="ChEBI" id="CHEBI:58332"/>
        <dbReference type="ChEBI" id="CHEBI:58608"/>
        <dbReference type="EC" id="2.7.7.41"/>
    </reaction>
</comment>
<comment type="pathway">
    <text>Phospholipid metabolism; CDP-diacylglycerol biosynthesis; CDP-diacylglycerol from sn-glycerol 3-phosphate: step 3/3.</text>
</comment>
<comment type="subcellular location">
    <subcellularLocation>
        <location evidence="1">Cell membrane</location>
        <topology evidence="1">Multi-pass membrane protein</topology>
    </subcellularLocation>
</comment>
<comment type="similarity">
    <text evidence="3">Belongs to the CDS family.</text>
</comment>
<gene>
    <name type="primary">cdsA</name>
    <name type="ordered locus">SA1104</name>
</gene>
<proteinExistence type="inferred from homology"/>
<organism>
    <name type="scientific">Staphylococcus aureus (strain N315)</name>
    <dbReference type="NCBI Taxonomy" id="158879"/>
    <lineage>
        <taxon>Bacteria</taxon>
        <taxon>Bacillati</taxon>
        <taxon>Bacillota</taxon>
        <taxon>Bacilli</taxon>
        <taxon>Bacillales</taxon>
        <taxon>Staphylococcaceae</taxon>
        <taxon>Staphylococcus</taxon>
    </lineage>
</organism>
<evidence type="ECO:0000250" key="1"/>
<evidence type="ECO:0000255" key="2"/>
<evidence type="ECO:0000305" key="3"/>
<feature type="chain" id="PRO_0000090749" description="Phosphatidate cytidylyltransferase">
    <location>
        <begin position="1"/>
        <end position="260"/>
    </location>
</feature>
<feature type="transmembrane region" description="Helical" evidence="2">
    <location>
        <begin position="9"/>
        <end position="29"/>
    </location>
</feature>
<feature type="transmembrane region" description="Helical" evidence="2">
    <location>
        <begin position="46"/>
        <end position="66"/>
    </location>
</feature>
<feature type="transmembrane region" description="Helical" evidence="2">
    <location>
        <begin position="70"/>
        <end position="90"/>
    </location>
</feature>
<feature type="transmembrane region" description="Helical" evidence="2">
    <location>
        <begin position="102"/>
        <end position="122"/>
    </location>
</feature>
<feature type="transmembrane region" description="Helical" evidence="2">
    <location>
        <begin position="130"/>
        <end position="150"/>
    </location>
</feature>
<feature type="transmembrane region" description="Helical" evidence="2">
    <location>
        <begin position="172"/>
        <end position="192"/>
    </location>
</feature>
<feature type="transmembrane region" description="Helical" evidence="2">
    <location>
        <begin position="196"/>
        <end position="216"/>
    </location>
</feature>
<keyword id="KW-1003">Cell membrane</keyword>
<keyword id="KW-0444">Lipid biosynthesis</keyword>
<keyword id="KW-0443">Lipid metabolism</keyword>
<keyword id="KW-0472">Membrane</keyword>
<keyword id="KW-0548">Nucleotidyltransferase</keyword>
<keyword id="KW-0594">Phospholipid biosynthesis</keyword>
<keyword id="KW-1208">Phospholipid metabolism</keyword>
<keyword id="KW-0808">Transferase</keyword>
<keyword id="KW-0812">Transmembrane</keyword>
<keyword id="KW-1133">Transmembrane helix</keyword>
<protein>
    <recommendedName>
        <fullName>Phosphatidate cytidylyltransferase</fullName>
        <ecNumber>2.7.7.41</ecNumber>
    </recommendedName>
    <alternativeName>
        <fullName>CDP-DAG synthase</fullName>
    </alternativeName>
    <alternativeName>
        <fullName>CDP-DG synthase</fullName>
    </alternativeName>
    <alternativeName>
        <fullName>CDP-diacylglycerol synthase</fullName>
        <shortName>CDS</shortName>
    </alternativeName>
    <alternativeName>
        <fullName>CDP-diglyceride pyrophosphorylase</fullName>
    </alternativeName>
    <alternativeName>
        <fullName>CDP-diglyceride synthase</fullName>
    </alternativeName>
    <alternativeName>
        <fullName>CTP:phosphatidate cytidylyltransferase</fullName>
    </alternativeName>
</protein>
<reference key="1">
    <citation type="journal article" date="2001" name="Lancet">
        <title>Whole genome sequencing of meticillin-resistant Staphylococcus aureus.</title>
        <authorList>
            <person name="Kuroda M."/>
            <person name="Ohta T."/>
            <person name="Uchiyama I."/>
            <person name="Baba T."/>
            <person name="Yuzawa H."/>
            <person name="Kobayashi I."/>
            <person name="Cui L."/>
            <person name="Oguchi A."/>
            <person name="Aoki K."/>
            <person name="Nagai Y."/>
            <person name="Lian J.-Q."/>
            <person name="Ito T."/>
            <person name="Kanamori M."/>
            <person name="Matsumaru H."/>
            <person name="Maruyama A."/>
            <person name="Murakami H."/>
            <person name="Hosoyama A."/>
            <person name="Mizutani-Ui Y."/>
            <person name="Takahashi N.K."/>
            <person name="Sawano T."/>
            <person name="Inoue R."/>
            <person name="Kaito C."/>
            <person name="Sekimizu K."/>
            <person name="Hirakawa H."/>
            <person name="Kuhara S."/>
            <person name="Goto S."/>
            <person name="Yabuzaki J."/>
            <person name="Kanehisa M."/>
            <person name="Yamashita A."/>
            <person name="Oshima K."/>
            <person name="Furuya K."/>
            <person name="Yoshino C."/>
            <person name="Shiba T."/>
            <person name="Hattori M."/>
            <person name="Ogasawara N."/>
            <person name="Hayashi H."/>
            <person name="Hiramatsu K."/>
        </authorList>
    </citation>
    <scope>NUCLEOTIDE SEQUENCE [LARGE SCALE GENOMIC DNA]</scope>
    <source>
        <strain>N315</strain>
    </source>
</reference>
<name>CDSA_STAAN</name>
<accession>Q7A5Y4</accession>